<dbReference type="EC" id="2.4.2.9" evidence="1"/>
<dbReference type="EMBL" id="CP000767">
    <property type="protein sequence ID" value="EAU01377.1"/>
    <property type="molecule type" value="Genomic_DNA"/>
</dbReference>
<dbReference type="RefSeq" id="WP_011992714.1">
    <property type="nucleotide sequence ID" value="NC_009715.2"/>
</dbReference>
<dbReference type="SMR" id="A7H0F9"/>
<dbReference type="STRING" id="360105.CCV52592_0546"/>
<dbReference type="KEGG" id="ccv:CCV52592_0546"/>
<dbReference type="HOGENOM" id="CLU_067096_2_2_7"/>
<dbReference type="OrthoDB" id="9781675at2"/>
<dbReference type="UniPathway" id="UPA00574">
    <property type="reaction ID" value="UER00636"/>
</dbReference>
<dbReference type="Proteomes" id="UP000006380">
    <property type="component" value="Chromosome"/>
</dbReference>
<dbReference type="GO" id="GO:0005525">
    <property type="term" value="F:GTP binding"/>
    <property type="evidence" value="ECO:0007669"/>
    <property type="project" value="UniProtKB-KW"/>
</dbReference>
<dbReference type="GO" id="GO:0000287">
    <property type="term" value="F:magnesium ion binding"/>
    <property type="evidence" value="ECO:0007669"/>
    <property type="project" value="UniProtKB-UniRule"/>
</dbReference>
<dbReference type="GO" id="GO:0004845">
    <property type="term" value="F:uracil phosphoribosyltransferase activity"/>
    <property type="evidence" value="ECO:0007669"/>
    <property type="project" value="UniProtKB-UniRule"/>
</dbReference>
<dbReference type="GO" id="GO:0044206">
    <property type="term" value="P:UMP salvage"/>
    <property type="evidence" value="ECO:0007669"/>
    <property type="project" value="UniProtKB-UniRule"/>
</dbReference>
<dbReference type="GO" id="GO:0006223">
    <property type="term" value="P:uracil salvage"/>
    <property type="evidence" value="ECO:0007669"/>
    <property type="project" value="InterPro"/>
</dbReference>
<dbReference type="CDD" id="cd06223">
    <property type="entry name" value="PRTases_typeI"/>
    <property type="match status" value="1"/>
</dbReference>
<dbReference type="FunFam" id="3.40.50.2020:FF:000003">
    <property type="entry name" value="Uracil phosphoribosyltransferase"/>
    <property type="match status" value="1"/>
</dbReference>
<dbReference type="Gene3D" id="3.40.50.2020">
    <property type="match status" value="1"/>
</dbReference>
<dbReference type="HAMAP" id="MF_01218_B">
    <property type="entry name" value="Upp_B"/>
    <property type="match status" value="1"/>
</dbReference>
<dbReference type="InterPro" id="IPR000836">
    <property type="entry name" value="PRibTrfase_dom"/>
</dbReference>
<dbReference type="InterPro" id="IPR029057">
    <property type="entry name" value="PRTase-like"/>
</dbReference>
<dbReference type="InterPro" id="IPR034332">
    <property type="entry name" value="Upp_B"/>
</dbReference>
<dbReference type="InterPro" id="IPR050054">
    <property type="entry name" value="UPRTase/APRTase"/>
</dbReference>
<dbReference type="InterPro" id="IPR005765">
    <property type="entry name" value="Ura_phspho_trans"/>
</dbReference>
<dbReference type="NCBIfam" id="NF001097">
    <property type="entry name" value="PRK00129.1"/>
    <property type="match status" value="1"/>
</dbReference>
<dbReference type="NCBIfam" id="TIGR01091">
    <property type="entry name" value="upp"/>
    <property type="match status" value="1"/>
</dbReference>
<dbReference type="PANTHER" id="PTHR32315">
    <property type="entry name" value="ADENINE PHOSPHORIBOSYLTRANSFERASE"/>
    <property type="match status" value="1"/>
</dbReference>
<dbReference type="PANTHER" id="PTHR32315:SF4">
    <property type="entry name" value="URACIL PHOSPHORIBOSYLTRANSFERASE, CHLOROPLASTIC"/>
    <property type="match status" value="1"/>
</dbReference>
<dbReference type="Pfam" id="PF14681">
    <property type="entry name" value="UPRTase"/>
    <property type="match status" value="1"/>
</dbReference>
<dbReference type="SUPFAM" id="SSF53271">
    <property type="entry name" value="PRTase-like"/>
    <property type="match status" value="1"/>
</dbReference>
<sequence>MKNVRLISHPLIEHKLAILRDKNTQPFQFRMLVDEISHLMIFEATRDLNLREISVQTPVATTKARKLATKVMICPILRAALGMLDSVFTIIPDASVGFLGFQRNEKTAQAEFFYAKLPKDAKSRLAIIIDPMFATGGTAIDAVKFLRENSVKQIKFISIIAAPEGLRRFSEIYPDVEVYTAAIDERLNEKNYIVPGLGDAGDRVFNTL</sequence>
<protein>
    <recommendedName>
        <fullName evidence="1">Uracil phosphoribosyltransferase</fullName>
        <ecNumber evidence="1">2.4.2.9</ecNumber>
    </recommendedName>
    <alternativeName>
        <fullName evidence="1">UMP pyrophosphorylase</fullName>
    </alternativeName>
    <alternativeName>
        <fullName evidence="1">UPRTase</fullName>
    </alternativeName>
</protein>
<reference key="1">
    <citation type="submission" date="2007-07" db="EMBL/GenBank/DDBJ databases">
        <title>Genome sequence of Campylobacter curvus 525.92 isolated from human feces.</title>
        <authorList>
            <person name="Fouts D.E."/>
            <person name="Mongodin E.F."/>
            <person name="Puiu D."/>
            <person name="Sebastian Y."/>
            <person name="Miller W.G."/>
            <person name="Mandrell R.E."/>
            <person name="Lastovica A.J."/>
            <person name="Nelson K.E."/>
        </authorList>
    </citation>
    <scope>NUCLEOTIDE SEQUENCE [LARGE SCALE GENOMIC DNA]</scope>
    <source>
        <strain>525.92</strain>
    </source>
</reference>
<feature type="chain" id="PRO_1000053695" description="Uracil phosphoribosyltransferase">
    <location>
        <begin position="1"/>
        <end position="208"/>
    </location>
</feature>
<feature type="binding site" evidence="1">
    <location>
        <position position="78"/>
    </location>
    <ligand>
        <name>5-phospho-alpha-D-ribose 1-diphosphate</name>
        <dbReference type="ChEBI" id="CHEBI:58017"/>
    </ligand>
</feature>
<feature type="binding site" evidence="1">
    <location>
        <position position="103"/>
    </location>
    <ligand>
        <name>5-phospho-alpha-D-ribose 1-diphosphate</name>
        <dbReference type="ChEBI" id="CHEBI:58017"/>
    </ligand>
</feature>
<feature type="binding site" evidence="1">
    <location>
        <begin position="130"/>
        <end position="138"/>
    </location>
    <ligand>
        <name>5-phospho-alpha-D-ribose 1-diphosphate</name>
        <dbReference type="ChEBI" id="CHEBI:58017"/>
    </ligand>
</feature>
<feature type="binding site" evidence="1">
    <location>
        <position position="193"/>
    </location>
    <ligand>
        <name>uracil</name>
        <dbReference type="ChEBI" id="CHEBI:17568"/>
    </ligand>
</feature>
<feature type="binding site" evidence="1">
    <location>
        <begin position="198"/>
        <end position="200"/>
    </location>
    <ligand>
        <name>uracil</name>
        <dbReference type="ChEBI" id="CHEBI:17568"/>
    </ligand>
</feature>
<feature type="binding site" evidence="1">
    <location>
        <position position="199"/>
    </location>
    <ligand>
        <name>5-phospho-alpha-D-ribose 1-diphosphate</name>
        <dbReference type="ChEBI" id="CHEBI:58017"/>
    </ligand>
</feature>
<accession>A7H0F9</accession>
<organism>
    <name type="scientific">Campylobacter curvus (strain 525.92)</name>
    <dbReference type="NCBI Taxonomy" id="360105"/>
    <lineage>
        <taxon>Bacteria</taxon>
        <taxon>Pseudomonadati</taxon>
        <taxon>Campylobacterota</taxon>
        <taxon>Epsilonproteobacteria</taxon>
        <taxon>Campylobacterales</taxon>
        <taxon>Campylobacteraceae</taxon>
        <taxon>Campylobacter</taxon>
    </lineage>
</organism>
<gene>
    <name evidence="1" type="primary">upp</name>
    <name type="ordered locus">Ccur92_16470</name>
    <name type="ORF">CCV52592_0546</name>
</gene>
<evidence type="ECO:0000255" key="1">
    <source>
        <dbReference type="HAMAP-Rule" id="MF_01218"/>
    </source>
</evidence>
<comment type="function">
    <text evidence="1">Catalyzes the conversion of uracil and 5-phospho-alpha-D-ribose 1-diphosphate (PRPP) to UMP and diphosphate.</text>
</comment>
<comment type="catalytic activity">
    <reaction evidence="1">
        <text>UMP + diphosphate = 5-phospho-alpha-D-ribose 1-diphosphate + uracil</text>
        <dbReference type="Rhea" id="RHEA:13017"/>
        <dbReference type="ChEBI" id="CHEBI:17568"/>
        <dbReference type="ChEBI" id="CHEBI:33019"/>
        <dbReference type="ChEBI" id="CHEBI:57865"/>
        <dbReference type="ChEBI" id="CHEBI:58017"/>
        <dbReference type="EC" id="2.4.2.9"/>
    </reaction>
</comment>
<comment type="cofactor">
    <cofactor evidence="1">
        <name>Mg(2+)</name>
        <dbReference type="ChEBI" id="CHEBI:18420"/>
    </cofactor>
    <text evidence="1">Binds 1 Mg(2+) ion per subunit. The magnesium is bound as Mg-PRPP.</text>
</comment>
<comment type="activity regulation">
    <text evidence="1">Allosterically activated by GTP.</text>
</comment>
<comment type="pathway">
    <text evidence="1">Pyrimidine metabolism; UMP biosynthesis via salvage pathway; UMP from uracil: step 1/1.</text>
</comment>
<comment type="similarity">
    <text evidence="1">Belongs to the UPRTase family.</text>
</comment>
<name>UPP_CAMC5</name>
<keyword id="KW-0021">Allosteric enzyme</keyword>
<keyword id="KW-0328">Glycosyltransferase</keyword>
<keyword id="KW-0342">GTP-binding</keyword>
<keyword id="KW-0460">Magnesium</keyword>
<keyword id="KW-0547">Nucleotide-binding</keyword>
<keyword id="KW-1185">Reference proteome</keyword>
<keyword id="KW-0808">Transferase</keyword>
<proteinExistence type="inferred from homology"/>